<evidence type="ECO:0000255" key="1">
    <source>
        <dbReference type="HAMAP-Rule" id="MF_00537"/>
    </source>
</evidence>
<evidence type="ECO:0000305" key="2"/>
<proteinExistence type="inferred from homology"/>
<dbReference type="EMBL" id="CP000671">
    <property type="protein sequence ID" value="ABQ98935.1"/>
    <property type="status" value="ALT_FRAME"/>
    <property type="molecule type" value="Genomic_DNA"/>
</dbReference>
<dbReference type="SMR" id="A5UDT4"/>
<dbReference type="KEGG" id="hip:CGSHiEE_08110"/>
<dbReference type="HOGENOM" id="CLU_139869_0_1_6"/>
<dbReference type="GO" id="GO:0005737">
    <property type="term" value="C:cytoplasm"/>
    <property type="evidence" value="ECO:0007669"/>
    <property type="project" value="UniProtKB-ARBA"/>
</dbReference>
<dbReference type="GO" id="GO:0015935">
    <property type="term" value="C:small ribosomal subunit"/>
    <property type="evidence" value="ECO:0007669"/>
    <property type="project" value="TreeGrafter"/>
</dbReference>
<dbReference type="GO" id="GO:0019843">
    <property type="term" value="F:rRNA binding"/>
    <property type="evidence" value="ECO:0007669"/>
    <property type="project" value="UniProtKB-UniRule"/>
</dbReference>
<dbReference type="GO" id="GO:0003735">
    <property type="term" value="F:structural constituent of ribosome"/>
    <property type="evidence" value="ECO:0007669"/>
    <property type="project" value="InterPro"/>
</dbReference>
<dbReference type="GO" id="GO:0006412">
    <property type="term" value="P:translation"/>
    <property type="evidence" value="ECO:0007669"/>
    <property type="project" value="UniProtKB-UniRule"/>
</dbReference>
<dbReference type="FunFam" id="1.10.287.1480:FF:000001">
    <property type="entry name" value="30S ribosomal protein S14"/>
    <property type="match status" value="1"/>
</dbReference>
<dbReference type="Gene3D" id="1.10.287.1480">
    <property type="match status" value="1"/>
</dbReference>
<dbReference type="HAMAP" id="MF_00537">
    <property type="entry name" value="Ribosomal_uS14_1"/>
    <property type="match status" value="1"/>
</dbReference>
<dbReference type="InterPro" id="IPR001209">
    <property type="entry name" value="Ribosomal_uS14"/>
</dbReference>
<dbReference type="InterPro" id="IPR023036">
    <property type="entry name" value="Ribosomal_uS14_bac/plastid"/>
</dbReference>
<dbReference type="InterPro" id="IPR018271">
    <property type="entry name" value="Ribosomal_uS14_CS"/>
</dbReference>
<dbReference type="NCBIfam" id="NF006477">
    <property type="entry name" value="PRK08881.1"/>
    <property type="match status" value="1"/>
</dbReference>
<dbReference type="PANTHER" id="PTHR19836">
    <property type="entry name" value="30S RIBOSOMAL PROTEIN S14"/>
    <property type="match status" value="1"/>
</dbReference>
<dbReference type="PANTHER" id="PTHR19836:SF19">
    <property type="entry name" value="SMALL RIBOSOMAL SUBUNIT PROTEIN US14M"/>
    <property type="match status" value="1"/>
</dbReference>
<dbReference type="Pfam" id="PF00253">
    <property type="entry name" value="Ribosomal_S14"/>
    <property type="match status" value="1"/>
</dbReference>
<dbReference type="SUPFAM" id="SSF57716">
    <property type="entry name" value="Glucocorticoid receptor-like (DNA-binding domain)"/>
    <property type="match status" value="1"/>
</dbReference>
<dbReference type="PROSITE" id="PS00527">
    <property type="entry name" value="RIBOSOMAL_S14"/>
    <property type="match status" value="1"/>
</dbReference>
<organism>
    <name type="scientific">Haemophilus influenzae (strain PittEE)</name>
    <dbReference type="NCBI Taxonomy" id="374930"/>
    <lineage>
        <taxon>Bacteria</taxon>
        <taxon>Pseudomonadati</taxon>
        <taxon>Pseudomonadota</taxon>
        <taxon>Gammaproteobacteria</taxon>
        <taxon>Pasteurellales</taxon>
        <taxon>Pasteurellaceae</taxon>
        <taxon>Haemophilus</taxon>
    </lineage>
</organism>
<accession>A5UDT4</accession>
<protein>
    <recommendedName>
        <fullName evidence="1">Small ribosomal subunit protein uS14</fullName>
    </recommendedName>
    <alternativeName>
        <fullName evidence="2">30S ribosomal protein S14</fullName>
    </alternativeName>
</protein>
<feature type="chain" id="PRO_0000354385" description="Small ribosomal subunit protein uS14">
    <location>
        <begin position="1"/>
        <end position="101"/>
    </location>
</feature>
<keyword id="KW-0687">Ribonucleoprotein</keyword>
<keyword id="KW-0689">Ribosomal protein</keyword>
<keyword id="KW-0694">RNA-binding</keyword>
<keyword id="KW-0699">rRNA-binding</keyword>
<sequence length="101" mass="11676">MAKQSMKARDVKRVKLAEKFYAKRVELKKIISDVNASDEDRWDAVLKLQTLPRDSSPSRQRNRCRQTGRPHGVLRKFGLSRIKVREAAMRGEIPGLKKASW</sequence>
<gene>
    <name evidence="1" type="primary">rpsN</name>
    <name type="ordered locus">CGSHiEE_08110</name>
</gene>
<name>RS14_HAEIE</name>
<reference key="1">
    <citation type="journal article" date="2007" name="Genome Biol.">
        <title>Characterization and modeling of the Haemophilus influenzae core and supragenomes based on the complete genomic sequences of Rd and 12 clinical nontypeable strains.</title>
        <authorList>
            <person name="Hogg J.S."/>
            <person name="Hu F.Z."/>
            <person name="Janto B."/>
            <person name="Boissy R."/>
            <person name="Hayes J."/>
            <person name="Keefe R."/>
            <person name="Post J.C."/>
            <person name="Ehrlich G.D."/>
        </authorList>
    </citation>
    <scope>NUCLEOTIDE SEQUENCE [LARGE SCALE GENOMIC DNA]</scope>
    <source>
        <strain>PittEE</strain>
    </source>
</reference>
<comment type="function">
    <text evidence="1">Binds 16S rRNA, required for the assembly of 30S particles and may also be responsible for determining the conformation of the 16S rRNA at the A site.</text>
</comment>
<comment type="subunit">
    <text evidence="1">Part of the 30S ribosomal subunit. Contacts proteins S3 and S10.</text>
</comment>
<comment type="similarity">
    <text evidence="1">Belongs to the universal ribosomal protein uS14 family.</text>
</comment>
<comment type="sequence caution" evidence="2">
    <conflict type="frameshift">
        <sequence resource="EMBL-CDS" id="ABQ98935"/>
    </conflict>
</comment>